<gene>
    <name evidence="1" type="primary">miaB</name>
    <name type="ordered locus">MXAN_3784</name>
</gene>
<proteinExistence type="inferred from homology"/>
<dbReference type="EC" id="2.8.4.3" evidence="1"/>
<dbReference type="EMBL" id="CP000113">
    <property type="protein sequence ID" value="ABF89047.1"/>
    <property type="molecule type" value="Genomic_DNA"/>
</dbReference>
<dbReference type="RefSeq" id="WP_011553797.1">
    <property type="nucleotide sequence ID" value="NC_008095.1"/>
</dbReference>
<dbReference type="SMR" id="Q1D5V7"/>
<dbReference type="STRING" id="246197.MXAN_3784"/>
<dbReference type="EnsemblBacteria" id="ABF89047">
    <property type="protein sequence ID" value="ABF89047"/>
    <property type="gene ID" value="MXAN_3784"/>
</dbReference>
<dbReference type="GeneID" id="41361116"/>
<dbReference type="KEGG" id="mxa:MXAN_3784"/>
<dbReference type="eggNOG" id="COG0621">
    <property type="taxonomic scope" value="Bacteria"/>
</dbReference>
<dbReference type="HOGENOM" id="CLU_018697_2_0_7"/>
<dbReference type="OrthoDB" id="9805215at2"/>
<dbReference type="Proteomes" id="UP000002402">
    <property type="component" value="Chromosome"/>
</dbReference>
<dbReference type="GO" id="GO:0005829">
    <property type="term" value="C:cytosol"/>
    <property type="evidence" value="ECO:0007669"/>
    <property type="project" value="TreeGrafter"/>
</dbReference>
<dbReference type="GO" id="GO:0051539">
    <property type="term" value="F:4 iron, 4 sulfur cluster binding"/>
    <property type="evidence" value="ECO:0007669"/>
    <property type="project" value="UniProtKB-UniRule"/>
</dbReference>
<dbReference type="GO" id="GO:0046872">
    <property type="term" value="F:metal ion binding"/>
    <property type="evidence" value="ECO:0007669"/>
    <property type="project" value="UniProtKB-KW"/>
</dbReference>
<dbReference type="GO" id="GO:0035597">
    <property type="term" value="F:N6-isopentenyladenosine methylthiotransferase activity"/>
    <property type="evidence" value="ECO:0007669"/>
    <property type="project" value="TreeGrafter"/>
</dbReference>
<dbReference type="CDD" id="cd01335">
    <property type="entry name" value="Radical_SAM"/>
    <property type="match status" value="1"/>
</dbReference>
<dbReference type="FunFam" id="3.40.50.12160:FF:000003">
    <property type="entry name" value="CDK5 regulatory subunit-associated protein 1"/>
    <property type="match status" value="1"/>
</dbReference>
<dbReference type="FunFam" id="3.80.30.20:FF:000001">
    <property type="entry name" value="tRNA-2-methylthio-N(6)-dimethylallyladenosine synthase 2"/>
    <property type="match status" value="1"/>
</dbReference>
<dbReference type="Gene3D" id="3.40.50.12160">
    <property type="entry name" value="Methylthiotransferase, N-terminal domain"/>
    <property type="match status" value="1"/>
</dbReference>
<dbReference type="Gene3D" id="3.80.30.20">
    <property type="entry name" value="tm_1862 like domain"/>
    <property type="match status" value="1"/>
</dbReference>
<dbReference type="HAMAP" id="MF_01864">
    <property type="entry name" value="tRNA_metthiotr_MiaB"/>
    <property type="match status" value="1"/>
</dbReference>
<dbReference type="InterPro" id="IPR006638">
    <property type="entry name" value="Elp3/MiaA/NifB-like_rSAM"/>
</dbReference>
<dbReference type="InterPro" id="IPR005839">
    <property type="entry name" value="Methylthiotransferase"/>
</dbReference>
<dbReference type="InterPro" id="IPR020612">
    <property type="entry name" value="Methylthiotransferase_CS"/>
</dbReference>
<dbReference type="InterPro" id="IPR013848">
    <property type="entry name" value="Methylthiotransferase_N"/>
</dbReference>
<dbReference type="InterPro" id="IPR038135">
    <property type="entry name" value="Methylthiotransferase_N_sf"/>
</dbReference>
<dbReference type="InterPro" id="IPR006463">
    <property type="entry name" value="MiaB_methiolase"/>
</dbReference>
<dbReference type="InterPro" id="IPR007197">
    <property type="entry name" value="rSAM"/>
</dbReference>
<dbReference type="InterPro" id="IPR023404">
    <property type="entry name" value="rSAM_horseshoe"/>
</dbReference>
<dbReference type="InterPro" id="IPR002792">
    <property type="entry name" value="TRAM_dom"/>
</dbReference>
<dbReference type="NCBIfam" id="TIGR01574">
    <property type="entry name" value="miaB-methiolase"/>
    <property type="match status" value="1"/>
</dbReference>
<dbReference type="NCBIfam" id="TIGR00089">
    <property type="entry name" value="MiaB/RimO family radical SAM methylthiotransferase"/>
    <property type="match status" value="1"/>
</dbReference>
<dbReference type="PANTHER" id="PTHR43020">
    <property type="entry name" value="CDK5 REGULATORY SUBUNIT-ASSOCIATED PROTEIN 1"/>
    <property type="match status" value="1"/>
</dbReference>
<dbReference type="PANTHER" id="PTHR43020:SF2">
    <property type="entry name" value="MITOCHONDRIAL TRNA METHYLTHIOTRANSFERASE CDK5RAP1"/>
    <property type="match status" value="1"/>
</dbReference>
<dbReference type="Pfam" id="PF04055">
    <property type="entry name" value="Radical_SAM"/>
    <property type="match status" value="1"/>
</dbReference>
<dbReference type="Pfam" id="PF01938">
    <property type="entry name" value="TRAM"/>
    <property type="match status" value="1"/>
</dbReference>
<dbReference type="Pfam" id="PF00919">
    <property type="entry name" value="UPF0004"/>
    <property type="match status" value="1"/>
</dbReference>
<dbReference type="SFLD" id="SFLDF00273">
    <property type="entry name" value="(dimethylallyl)adenosine_tRNA"/>
    <property type="match status" value="1"/>
</dbReference>
<dbReference type="SFLD" id="SFLDG01082">
    <property type="entry name" value="B12-binding_domain_containing"/>
    <property type="match status" value="1"/>
</dbReference>
<dbReference type="SFLD" id="SFLDG01061">
    <property type="entry name" value="methylthiotransferase"/>
    <property type="match status" value="1"/>
</dbReference>
<dbReference type="SMART" id="SM00729">
    <property type="entry name" value="Elp3"/>
    <property type="match status" value="1"/>
</dbReference>
<dbReference type="SUPFAM" id="SSF102114">
    <property type="entry name" value="Radical SAM enzymes"/>
    <property type="match status" value="1"/>
</dbReference>
<dbReference type="PROSITE" id="PS51449">
    <property type="entry name" value="MTTASE_N"/>
    <property type="match status" value="1"/>
</dbReference>
<dbReference type="PROSITE" id="PS01278">
    <property type="entry name" value="MTTASE_RADICAL"/>
    <property type="match status" value="1"/>
</dbReference>
<dbReference type="PROSITE" id="PS51918">
    <property type="entry name" value="RADICAL_SAM"/>
    <property type="match status" value="1"/>
</dbReference>
<dbReference type="PROSITE" id="PS50926">
    <property type="entry name" value="TRAM"/>
    <property type="match status" value="1"/>
</dbReference>
<keyword id="KW-0004">4Fe-4S</keyword>
<keyword id="KW-0963">Cytoplasm</keyword>
<keyword id="KW-0408">Iron</keyword>
<keyword id="KW-0411">Iron-sulfur</keyword>
<keyword id="KW-0479">Metal-binding</keyword>
<keyword id="KW-1185">Reference proteome</keyword>
<keyword id="KW-0949">S-adenosyl-L-methionine</keyword>
<keyword id="KW-0808">Transferase</keyword>
<keyword id="KW-0819">tRNA processing</keyword>
<evidence type="ECO:0000255" key="1">
    <source>
        <dbReference type="HAMAP-Rule" id="MF_01864"/>
    </source>
</evidence>
<evidence type="ECO:0000255" key="2">
    <source>
        <dbReference type="PROSITE-ProRule" id="PRU01266"/>
    </source>
</evidence>
<comment type="function">
    <text evidence="1">Catalyzes the methylthiolation of N6-(dimethylallyl)adenosine (i(6)A), leading to the formation of 2-methylthio-N6-(dimethylallyl)adenosine (ms(2)i(6)A) at position 37 in tRNAs that read codons beginning with uridine.</text>
</comment>
<comment type="catalytic activity">
    <reaction evidence="1">
        <text>N(6)-dimethylallyladenosine(37) in tRNA + (sulfur carrier)-SH + AH2 + 2 S-adenosyl-L-methionine = 2-methylsulfanyl-N(6)-dimethylallyladenosine(37) in tRNA + (sulfur carrier)-H + 5'-deoxyadenosine + L-methionine + A + S-adenosyl-L-homocysteine + 2 H(+)</text>
        <dbReference type="Rhea" id="RHEA:37067"/>
        <dbReference type="Rhea" id="RHEA-COMP:10375"/>
        <dbReference type="Rhea" id="RHEA-COMP:10376"/>
        <dbReference type="Rhea" id="RHEA-COMP:14737"/>
        <dbReference type="Rhea" id="RHEA-COMP:14739"/>
        <dbReference type="ChEBI" id="CHEBI:13193"/>
        <dbReference type="ChEBI" id="CHEBI:15378"/>
        <dbReference type="ChEBI" id="CHEBI:17319"/>
        <dbReference type="ChEBI" id="CHEBI:17499"/>
        <dbReference type="ChEBI" id="CHEBI:29917"/>
        <dbReference type="ChEBI" id="CHEBI:57844"/>
        <dbReference type="ChEBI" id="CHEBI:57856"/>
        <dbReference type="ChEBI" id="CHEBI:59789"/>
        <dbReference type="ChEBI" id="CHEBI:64428"/>
        <dbReference type="ChEBI" id="CHEBI:74415"/>
        <dbReference type="ChEBI" id="CHEBI:74417"/>
        <dbReference type="EC" id="2.8.4.3"/>
    </reaction>
</comment>
<comment type="cofactor">
    <cofactor evidence="1">
        <name>[4Fe-4S] cluster</name>
        <dbReference type="ChEBI" id="CHEBI:49883"/>
    </cofactor>
    <text evidence="1">Binds 2 [4Fe-4S] clusters. One cluster is coordinated with 3 cysteines and an exchangeable S-adenosyl-L-methionine.</text>
</comment>
<comment type="subunit">
    <text evidence="1">Monomer.</text>
</comment>
<comment type="subcellular location">
    <subcellularLocation>
        <location evidence="1">Cytoplasm</location>
    </subcellularLocation>
</comment>
<comment type="similarity">
    <text evidence="1">Belongs to the methylthiotransferase family. MiaB subfamily.</text>
</comment>
<sequence>MKRYFIHTFGCQMNVNDSLRMSEVLSQMSYAPTPVPDNADLIILNTCSIREKAEDKMLSALGRYKPVKASRGALIGVGGCVAQQEKDKLLKKVPYLDFVFGPDNIARLPDIIGRVSAERERVVETAFVNSEEYVFPRADPETSRGKVTEFVTVMKGCDNVCSFCIVPHTRGREVSRAFPDVLVEVADLAKVGVREVTLIGQNVNSYAGGISFAQLLLRTAEVPGIERVRFTTSHPHDLSDELIEAFRVQPKITPHFHLPVQCGSDRILKMMRRDYTVVQYLERLAKLREARPGIAVTTDIIVGFPGETEEEFEMTMQLTEQVRYDNQFSFVYSPRPKTGAALREKDWGPVPHEVKIARLERLQKLQRRISGEITAALVGSEVEVMVEGHSRYDATKRFGRTPENRTVNFDGDAPAGSFVTVKVERATPNQLAGKQVALLKPPTVEPLPVPMAEAPFHVVAEA</sequence>
<organism>
    <name type="scientific">Myxococcus xanthus (strain DK1622)</name>
    <dbReference type="NCBI Taxonomy" id="246197"/>
    <lineage>
        <taxon>Bacteria</taxon>
        <taxon>Pseudomonadati</taxon>
        <taxon>Myxococcota</taxon>
        <taxon>Myxococcia</taxon>
        <taxon>Myxococcales</taxon>
        <taxon>Cystobacterineae</taxon>
        <taxon>Myxococcaceae</taxon>
        <taxon>Myxococcus</taxon>
    </lineage>
</organism>
<feature type="chain" id="PRO_0000374398" description="tRNA-2-methylthio-N(6)-dimethylallyladenosine synthase">
    <location>
        <begin position="1"/>
        <end position="462"/>
    </location>
</feature>
<feature type="domain" description="MTTase N-terminal" evidence="1">
    <location>
        <begin position="2"/>
        <end position="117"/>
    </location>
</feature>
<feature type="domain" description="Radical SAM core" evidence="2">
    <location>
        <begin position="143"/>
        <end position="372"/>
    </location>
</feature>
<feature type="domain" description="TRAM" evidence="1">
    <location>
        <begin position="375"/>
        <end position="437"/>
    </location>
</feature>
<feature type="binding site" evidence="1">
    <location>
        <position position="11"/>
    </location>
    <ligand>
        <name>[4Fe-4S] cluster</name>
        <dbReference type="ChEBI" id="CHEBI:49883"/>
        <label>1</label>
    </ligand>
</feature>
<feature type="binding site" evidence="1">
    <location>
        <position position="47"/>
    </location>
    <ligand>
        <name>[4Fe-4S] cluster</name>
        <dbReference type="ChEBI" id="CHEBI:49883"/>
        <label>1</label>
    </ligand>
</feature>
<feature type="binding site" evidence="1">
    <location>
        <position position="80"/>
    </location>
    <ligand>
        <name>[4Fe-4S] cluster</name>
        <dbReference type="ChEBI" id="CHEBI:49883"/>
        <label>1</label>
    </ligand>
</feature>
<feature type="binding site" evidence="1">
    <location>
        <position position="157"/>
    </location>
    <ligand>
        <name>[4Fe-4S] cluster</name>
        <dbReference type="ChEBI" id="CHEBI:49883"/>
        <label>2</label>
        <note>4Fe-4S-S-AdoMet</note>
    </ligand>
</feature>
<feature type="binding site" evidence="1">
    <location>
        <position position="161"/>
    </location>
    <ligand>
        <name>[4Fe-4S] cluster</name>
        <dbReference type="ChEBI" id="CHEBI:49883"/>
        <label>2</label>
        <note>4Fe-4S-S-AdoMet</note>
    </ligand>
</feature>
<feature type="binding site" evidence="1">
    <location>
        <position position="164"/>
    </location>
    <ligand>
        <name>[4Fe-4S] cluster</name>
        <dbReference type="ChEBI" id="CHEBI:49883"/>
        <label>2</label>
        <note>4Fe-4S-S-AdoMet</note>
    </ligand>
</feature>
<reference key="1">
    <citation type="journal article" date="2006" name="Proc. Natl. Acad. Sci. U.S.A.">
        <title>Evolution of sensory complexity recorded in a myxobacterial genome.</title>
        <authorList>
            <person name="Goldman B.S."/>
            <person name="Nierman W.C."/>
            <person name="Kaiser D."/>
            <person name="Slater S.C."/>
            <person name="Durkin A.S."/>
            <person name="Eisen J.A."/>
            <person name="Ronning C.M."/>
            <person name="Barbazuk W.B."/>
            <person name="Blanchard M."/>
            <person name="Field C."/>
            <person name="Halling C."/>
            <person name="Hinkle G."/>
            <person name="Iartchuk O."/>
            <person name="Kim H.S."/>
            <person name="Mackenzie C."/>
            <person name="Madupu R."/>
            <person name="Miller N."/>
            <person name="Shvartsbeyn A."/>
            <person name="Sullivan S.A."/>
            <person name="Vaudin M."/>
            <person name="Wiegand R."/>
            <person name="Kaplan H.B."/>
        </authorList>
    </citation>
    <scope>NUCLEOTIDE SEQUENCE [LARGE SCALE GENOMIC DNA]</scope>
    <source>
        <strain>DK1622</strain>
    </source>
</reference>
<accession>Q1D5V7</accession>
<protein>
    <recommendedName>
        <fullName evidence="1">tRNA-2-methylthio-N(6)-dimethylallyladenosine synthase</fullName>
        <ecNumber evidence="1">2.8.4.3</ecNumber>
    </recommendedName>
    <alternativeName>
        <fullName evidence="1">(Dimethylallyl)adenosine tRNA methylthiotransferase MiaB</fullName>
    </alternativeName>
    <alternativeName>
        <fullName evidence="1">tRNA-i(6)A37 methylthiotransferase</fullName>
    </alternativeName>
</protein>
<name>MIAB_MYXXD</name>